<proteinExistence type="inferred from homology"/>
<comment type="function">
    <text evidence="1">Assembles around the rod to form the L-ring and probably protects the motor/basal body from shearing forces during rotation.</text>
</comment>
<comment type="subunit">
    <text evidence="1">The basal body constitutes a major portion of the flagellar organelle and consists of four rings (L,P,S, and M) mounted on a central rod.</text>
</comment>
<comment type="subcellular location">
    <subcellularLocation>
        <location evidence="1">Periplasm</location>
    </subcellularLocation>
    <subcellularLocation>
        <location evidence="1">Bacterial flagellum basal body</location>
    </subcellularLocation>
</comment>
<comment type="similarity">
    <text evidence="1">Belongs to the FlgI family.</text>
</comment>
<keyword id="KW-0975">Bacterial flagellum</keyword>
<keyword id="KW-0574">Periplasm</keyword>
<keyword id="KW-1185">Reference proteome</keyword>
<keyword id="KW-0732">Signal</keyword>
<sequence length="371" mass="38352">MSIRVLLFSIFTGFLLAAAGPALAQGSRIKDVASLQAGRDNQLIGYGLVVGLQSTGDSLRSSPFTDQSMRAMLQNLGISTQGGQSSAKNVAAVMVTATLPPFGSPGSRIDATVSSLGDATSLRGGTLIMTSLSGADGQIYAVAQGSVVVSGFTAQGQAATVTEGVTTSGRVPNGAIIERELPSKFKDSVNLVLQLRNPDFSTSLGMARRINNYATATYGAPIAEARDSQEVVIQKPRTADLAQLMADIENLVVETDTPAKVVINERTGTIVIGADVRVSKVAVSYGTLTVQVNETPQVIQPQPFSSGTTATQPQTDISAQKTGDKVAIVDGPDLRTLVAGLNNIGVKPDGIIAILQGIKSAGALQAELVLQ</sequence>
<accession>B9JRP8</accession>
<reference key="1">
    <citation type="journal article" date="2009" name="J. Bacteriol.">
        <title>Genome sequences of three Agrobacterium biovars help elucidate the evolution of multichromosome genomes in bacteria.</title>
        <authorList>
            <person name="Slater S.C."/>
            <person name="Goldman B.S."/>
            <person name="Goodner B."/>
            <person name="Setubal J.C."/>
            <person name="Farrand S.K."/>
            <person name="Nester E.W."/>
            <person name="Burr T.J."/>
            <person name="Banta L."/>
            <person name="Dickerman A.W."/>
            <person name="Paulsen I."/>
            <person name="Otten L."/>
            <person name="Suen G."/>
            <person name="Welch R."/>
            <person name="Almeida N.F."/>
            <person name="Arnold F."/>
            <person name="Burton O.T."/>
            <person name="Du Z."/>
            <person name="Ewing A."/>
            <person name="Godsy E."/>
            <person name="Heisel S."/>
            <person name="Houmiel K.L."/>
            <person name="Jhaveri J."/>
            <person name="Lu J."/>
            <person name="Miller N.M."/>
            <person name="Norton S."/>
            <person name="Chen Q."/>
            <person name="Phoolcharoen W."/>
            <person name="Ohlin V."/>
            <person name="Ondrusek D."/>
            <person name="Pride N."/>
            <person name="Stricklin S.L."/>
            <person name="Sun J."/>
            <person name="Wheeler C."/>
            <person name="Wilson L."/>
            <person name="Zhu H."/>
            <person name="Wood D.W."/>
        </authorList>
    </citation>
    <scope>NUCLEOTIDE SEQUENCE [LARGE SCALE GENOMIC DNA]</scope>
    <source>
        <strain>ATCC BAA-846 / DSM 112012 / S4</strain>
    </source>
</reference>
<evidence type="ECO:0000255" key="1">
    <source>
        <dbReference type="HAMAP-Rule" id="MF_00416"/>
    </source>
</evidence>
<evidence type="ECO:0000256" key="2">
    <source>
        <dbReference type="SAM" id="MobiDB-lite"/>
    </source>
</evidence>
<gene>
    <name evidence="1" type="primary">flgI</name>
    <name type="ordered locus">Avi_0742</name>
</gene>
<feature type="signal peptide" evidence="1">
    <location>
        <begin position="1"/>
        <end position="24"/>
    </location>
</feature>
<feature type="chain" id="PRO_1000134836" description="Flagellar P-ring protein">
    <location>
        <begin position="25"/>
        <end position="371"/>
    </location>
</feature>
<feature type="region of interest" description="Disordered" evidence="2">
    <location>
        <begin position="301"/>
        <end position="322"/>
    </location>
</feature>
<feature type="compositionally biased region" description="Polar residues" evidence="2">
    <location>
        <begin position="301"/>
        <end position="321"/>
    </location>
</feature>
<protein>
    <recommendedName>
        <fullName evidence="1">Flagellar P-ring protein</fullName>
    </recommendedName>
    <alternativeName>
        <fullName evidence="1">Basal body P-ring protein</fullName>
    </alternativeName>
</protein>
<dbReference type="EMBL" id="CP000633">
    <property type="protein sequence ID" value="ACM35524.1"/>
    <property type="molecule type" value="Genomic_DNA"/>
</dbReference>
<dbReference type="SMR" id="B9JRP8"/>
<dbReference type="STRING" id="311402.Avi_0742"/>
<dbReference type="KEGG" id="avi:Avi_0742"/>
<dbReference type="eggNOG" id="COG1706">
    <property type="taxonomic scope" value="Bacteria"/>
</dbReference>
<dbReference type="HOGENOM" id="CLU_045235_1_0_5"/>
<dbReference type="Proteomes" id="UP000001596">
    <property type="component" value="Chromosome 1"/>
</dbReference>
<dbReference type="GO" id="GO:0009428">
    <property type="term" value="C:bacterial-type flagellum basal body, distal rod, P ring"/>
    <property type="evidence" value="ECO:0007669"/>
    <property type="project" value="InterPro"/>
</dbReference>
<dbReference type="GO" id="GO:0030288">
    <property type="term" value="C:outer membrane-bounded periplasmic space"/>
    <property type="evidence" value="ECO:0007669"/>
    <property type="project" value="InterPro"/>
</dbReference>
<dbReference type="GO" id="GO:0005198">
    <property type="term" value="F:structural molecule activity"/>
    <property type="evidence" value="ECO:0007669"/>
    <property type="project" value="InterPro"/>
</dbReference>
<dbReference type="GO" id="GO:0071973">
    <property type="term" value="P:bacterial-type flagellum-dependent cell motility"/>
    <property type="evidence" value="ECO:0007669"/>
    <property type="project" value="InterPro"/>
</dbReference>
<dbReference type="HAMAP" id="MF_00416">
    <property type="entry name" value="FlgI"/>
    <property type="match status" value="1"/>
</dbReference>
<dbReference type="InterPro" id="IPR001782">
    <property type="entry name" value="Flag_FlgI"/>
</dbReference>
<dbReference type="NCBIfam" id="NF003676">
    <property type="entry name" value="PRK05303.1"/>
    <property type="match status" value="1"/>
</dbReference>
<dbReference type="PANTHER" id="PTHR30381">
    <property type="entry name" value="FLAGELLAR P-RING PERIPLASMIC PROTEIN FLGI"/>
    <property type="match status" value="1"/>
</dbReference>
<dbReference type="PANTHER" id="PTHR30381:SF0">
    <property type="entry name" value="FLAGELLAR P-RING PROTEIN"/>
    <property type="match status" value="1"/>
</dbReference>
<dbReference type="Pfam" id="PF02119">
    <property type="entry name" value="FlgI"/>
    <property type="match status" value="1"/>
</dbReference>
<dbReference type="PRINTS" id="PR01010">
    <property type="entry name" value="FLGPRINGFLGI"/>
</dbReference>
<organism>
    <name type="scientific">Allorhizobium ampelinum (strain ATCC BAA-846 / DSM 112012 / S4)</name>
    <name type="common">Agrobacterium vitis (strain S4)</name>
    <dbReference type="NCBI Taxonomy" id="311402"/>
    <lineage>
        <taxon>Bacteria</taxon>
        <taxon>Pseudomonadati</taxon>
        <taxon>Pseudomonadota</taxon>
        <taxon>Alphaproteobacteria</taxon>
        <taxon>Hyphomicrobiales</taxon>
        <taxon>Rhizobiaceae</taxon>
        <taxon>Rhizobium/Agrobacterium group</taxon>
        <taxon>Allorhizobium</taxon>
        <taxon>Allorhizobium ampelinum</taxon>
    </lineage>
</organism>
<name>FLGI_ALLAM</name>